<sequence>MRFFSYLGLLLAGLASLQGFSTDNPLEEELRCWCLYVKNCRFCWACQDGLCKNKVLKDMPPVQEHSYPMEYCMLHRQCKYITDGPIFQVECTMQTCDAIRLLNA</sequence>
<organism>
    <name type="scientific">African swine fever virus (isolate Tick/South Africa/Pretoriuskop Pr4/1996)</name>
    <name type="common">ASFV</name>
    <dbReference type="NCBI Taxonomy" id="561443"/>
    <lineage>
        <taxon>Viruses</taxon>
        <taxon>Varidnaviria</taxon>
        <taxon>Bamfordvirae</taxon>
        <taxon>Nucleocytoviricota</taxon>
        <taxon>Pokkesviricetes</taxon>
        <taxon>Asfuvirales</taxon>
        <taxon>Asfarviridae</taxon>
        <taxon>Asfivirus</taxon>
        <taxon>African swine fever virus</taxon>
    </lineage>
</organism>
<accession>P0C9G8</accession>
<proteinExistence type="inferred from homology"/>
<comment type="function">
    <text evidence="1">Plays a role in virus cell tropism, and may be required for efficient virus replication in macrophages.</text>
</comment>
<comment type="induction">
    <text evidence="2">Expressed in the early phase of the viral replicative cycle.</text>
</comment>
<comment type="similarity">
    <text evidence="4">Belongs to the asfivirus MGF 110 family.</text>
</comment>
<organismHost>
    <name type="scientific">Ornithodoros</name>
    <name type="common">relapsing fever ticks</name>
    <dbReference type="NCBI Taxonomy" id="6937"/>
</organismHost>
<organismHost>
    <name type="scientific">Phacochoerus aethiopicus</name>
    <name type="common">Warthog</name>
    <dbReference type="NCBI Taxonomy" id="85517"/>
</organismHost>
<organismHost>
    <name type="scientific">Phacochoerus africanus</name>
    <name type="common">Warthog</name>
    <dbReference type="NCBI Taxonomy" id="41426"/>
</organismHost>
<organismHost>
    <name type="scientific">Potamochoerus larvatus</name>
    <name type="common">Bushpig</name>
    <dbReference type="NCBI Taxonomy" id="273792"/>
</organismHost>
<organismHost>
    <name type="scientific">Sus scrofa</name>
    <name type="common">Pig</name>
    <dbReference type="NCBI Taxonomy" id="9823"/>
</organismHost>
<protein>
    <recommendedName>
        <fullName>Protein MGF 110-2L</fullName>
    </recommendedName>
</protein>
<dbReference type="EMBL" id="AY261363">
    <property type="status" value="NOT_ANNOTATED_CDS"/>
    <property type="molecule type" value="Genomic_DNA"/>
</dbReference>
<dbReference type="Proteomes" id="UP000000859">
    <property type="component" value="Segment"/>
</dbReference>
<dbReference type="InterPro" id="IPR004848">
    <property type="entry name" value="ASFV_fam_110"/>
</dbReference>
<dbReference type="Pfam" id="PF01639">
    <property type="entry name" value="v110"/>
    <property type="match status" value="1"/>
</dbReference>
<gene>
    <name type="ordered locus">Pret-009</name>
</gene>
<reference key="1">
    <citation type="submission" date="2003-03" db="EMBL/GenBank/DDBJ databases">
        <title>African swine fever virus genomes.</title>
        <authorList>
            <person name="Kutish G.F."/>
            <person name="Rock D.L."/>
        </authorList>
    </citation>
    <scope>NUCLEOTIDE SEQUENCE [LARGE SCALE GENOMIC DNA]</scope>
</reference>
<keyword id="KW-0244">Early protein</keyword>
<keyword id="KW-0732">Signal</keyword>
<feature type="signal peptide" evidence="3">
    <location>
        <begin position="1"/>
        <end position="19"/>
    </location>
</feature>
<feature type="chain" id="PRO_0000373190" description="Protein MGF 110-2L">
    <location>
        <begin position="20"/>
        <end position="104"/>
    </location>
</feature>
<evidence type="ECO:0000250" key="1"/>
<evidence type="ECO:0000250" key="2">
    <source>
        <dbReference type="UniProtKB" id="P18559"/>
    </source>
</evidence>
<evidence type="ECO:0000255" key="3"/>
<evidence type="ECO:0000305" key="4"/>
<name>1102L_ASFP4</name>